<gene>
    <name evidence="1" type="primary">folD</name>
    <name type="ordered locus">Mmcs_1204</name>
</gene>
<feature type="chain" id="PRO_0000268403" description="Bifunctional protein FolD">
    <location>
        <begin position="1"/>
        <end position="285"/>
    </location>
</feature>
<feature type="binding site" evidence="1">
    <location>
        <begin position="165"/>
        <end position="167"/>
    </location>
    <ligand>
        <name>NADP(+)</name>
        <dbReference type="ChEBI" id="CHEBI:58349"/>
    </ligand>
</feature>
<feature type="binding site" evidence="1">
    <location>
        <position position="192"/>
    </location>
    <ligand>
        <name>NADP(+)</name>
        <dbReference type="ChEBI" id="CHEBI:58349"/>
    </ligand>
</feature>
<feature type="binding site" evidence="1">
    <location>
        <position position="233"/>
    </location>
    <ligand>
        <name>NADP(+)</name>
        <dbReference type="ChEBI" id="CHEBI:58349"/>
    </ligand>
</feature>
<keyword id="KW-0028">Amino-acid biosynthesis</keyword>
<keyword id="KW-0368">Histidine biosynthesis</keyword>
<keyword id="KW-0378">Hydrolase</keyword>
<keyword id="KW-0486">Methionine biosynthesis</keyword>
<keyword id="KW-0511">Multifunctional enzyme</keyword>
<keyword id="KW-0521">NADP</keyword>
<keyword id="KW-0554">One-carbon metabolism</keyword>
<keyword id="KW-0560">Oxidoreductase</keyword>
<keyword id="KW-0658">Purine biosynthesis</keyword>
<accession>Q1BCR8</accession>
<sequence length="285" mass="30170">MGAITLDGKATRDEIFVDLKERVAALTEQGRTPGLGTVLVGDDPGSQAYVRGKHSDCAKVGINSIRRDLPADISQAELDATIDELNANPECTGYIVQLPLPKHLDENAALERIDPGKDADGLHPTNLGRLVLNEPAPLPCTPRGIVHLLRRYEVEIAGAHVVVIGRGVTVGRPLGLLLTRRSENATVTLCHTATRHLPQFTREADIIVAAAGVPHMVTAEMVRPGAAVIDVGVSRDDNGKLVGDVAPDVWEVAGHVSPNPGGVGPLTRAFLLTNVVERAEALARG</sequence>
<dbReference type="EC" id="1.5.1.5" evidence="1"/>
<dbReference type="EC" id="3.5.4.9" evidence="1"/>
<dbReference type="EMBL" id="CP000384">
    <property type="protein sequence ID" value="ABG07316.1"/>
    <property type="status" value="ALT_INIT"/>
    <property type="molecule type" value="Genomic_DNA"/>
</dbReference>
<dbReference type="SMR" id="Q1BCR8"/>
<dbReference type="KEGG" id="mmc:Mmcs_1204"/>
<dbReference type="HOGENOM" id="CLU_034045_3_0_11"/>
<dbReference type="UniPathway" id="UPA00193"/>
<dbReference type="GO" id="GO:0005829">
    <property type="term" value="C:cytosol"/>
    <property type="evidence" value="ECO:0007669"/>
    <property type="project" value="TreeGrafter"/>
</dbReference>
<dbReference type="GO" id="GO:0004477">
    <property type="term" value="F:methenyltetrahydrofolate cyclohydrolase activity"/>
    <property type="evidence" value="ECO:0007669"/>
    <property type="project" value="UniProtKB-UniRule"/>
</dbReference>
<dbReference type="GO" id="GO:0004488">
    <property type="term" value="F:methylenetetrahydrofolate dehydrogenase (NADP+) activity"/>
    <property type="evidence" value="ECO:0007669"/>
    <property type="project" value="UniProtKB-UniRule"/>
</dbReference>
<dbReference type="GO" id="GO:0000105">
    <property type="term" value="P:L-histidine biosynthetic process"/>
    <property type="evidence" value="ECO:0007669"/>
    <property type="project" value="UniProtKB-KW"/>
</dbReference>
<dbReference type="GO" id="GO:0009086">
    <property type="term" value="P:methionine biosynthetic process"/>
    <property type="evidence" value="ECO:0007669"/>
    <property type="project" value="UniProtKB-KW"/>
</dbReference>
<dbReference type="GO" id="GO:0006164">
    <property type="term" value="P:purine nucleotide biosynthetic process"/>
    <property type="evidence" value="ECO:0007669"/>
    <property type="project" value="UniProtKB-KW"/>
</dbReference>
<dbReference type="GO" id="GO:0035999">
    <property type="term" value="P:tetrahydrofolate interconversion"/>
    <property type="evidence" value="ECO:0007669"/>
    <property type="project" value="UniProtKB-UniRule"/>
</dbReference>
<dbReference type="CDD" id="cd01080">
    <property type="entry name" value="NAD_bind_m-THF_DH_Cyclohyd"/>
    <property type="match status" value="1"/>
</dbReference>
<dbReference type="FunFam" id="3.40.50.720:FF:000094">
    <property type="entry name" value="Bifunctional protein FolD"/>
    <property type="match status" value="1"/>
</dbReference>
<dbReference type="FunFam" id="3.40.50.10860:FF:000005">
    <property type="entry name" value="C-1-tetrahydrofolate synthase, cytoplasmic, putative"/>
    <property type="match status" value="1"/>
</dbReference>
<dbReference type="Gene3D" id="3.40.50.10860">
    <property type="entry name" value="Leucine Dehydrogenase, chain A, domain 1"/>
    <property type="match status" value="1"/>
</dbReference>
<dbReference type="Gene3D" id="3.40.50.720">
    <property type="entry name" value="NAD(P)-binding Rossmann-like Domain"/>
    <property type="match status" value="1"/>
</dbReference>
<dbReference type="HAMAP" id="MF_01576">
    <property type="entry name" value="THF_DHG_CYH"/>
    <property type="match status" value="1"/>
</dbReference>
<dbReference type="InterPro" id="IPR046346">
    <property type="entry name" value="Aminoacid_DH-like_N_sf"/>
</dbReference>
<dbReference type="InterPro" id="IPR036291">
    <property type="entry name" value="NAD(P)-bd_dom_sf"/>
</dbReference>
<dbReference type="InterPro" id="IPR000672">
    <property type="entry name" value="THF_DH/CycHdrlase"/>
</dbReference>
<dbReference type="InterPro" id="IPR020630">
    <property type="entry name" value="THF_DH/CycHdrlase_cat_dom"/>
</dbReference>
<dbReference type="InterPro" id="IPR020631">
    <property type="entry name" value="THF_DH/CycHdrlase_NAD-bd_dom"/>
</dbReference>
<dbReference type="NCBIfam" id="NF010789">
    <property type="entry name" value="PRK14193.1"/>
    <property type="match status" value="1"/>
</dbReference>
<dbReference type="PANTHER" id="PTHR48099:SF5">
    <property type="entry name" value="C-1-TETRAHYDROFOLATE SYNTHASE, CYTOPLASMIC"/>
    <property type="match status" value="1"/>
</dbReference>
<dbReference type="PANTHER" id="PTHR48099">
    <property type="entry name" value="C-1-TETRAHYDROFOLATE SYNTHASE, CYTOPLASMIC-RELATED"/>
    <property type="match status" value="1"/>
</dbReference>
<dbReference type="Pfam" id="PF00763">
    <property type="entry name" value="THF_DHG_CYH"/>
    <property type="match status" value="1"/>
</dbReference>
<dbReference type="Pfam" id="PF02882">
    <property type="entry name" value="THF_DHG_CYH_C"/>
    <property type="match status" value="1"/>
</dbReference>
<dbReference type="PRINTS" id="PR00085">
    <property type="entry name" value="THFDHDRGNASE"/>
</dbReference>
<dbReference type="SUPFAM" id="SSF53223">
    <property type="entry name" value="Aminoacid dehydrogenase-like, N-terminal domain"/>
    <property type="match status" value="1"/>
</dbReference>
<dbReference type="SUPFAM" id="SSF51735">
    <property type="entry name" value="NAD(P)-binding Rossmann-fold domains"/>
    <property type="match status" value="1"/>
</dbReference>
<reference key="1">
    <citation type="submission" date="2006-06" db="EMBL/GenBank/DDBJ databases">
        <title>Complete sequence of chromosome of Mycobacterium sp. MCS.</title>
        <authorList>
            <consortium name="US DOE Joint Genome Institute"/>
            <person name="Copeland A."/>
            <person name="Lucas S."/>
            <person name="Lapidus A."/>
            <person name="Barry K."/>
            <person name="Detter J.C."/>
            <person name="Glavina del Rio T."/>
            <person name="Hammon N."/>
            <person name="Israni S."/>
            <person name="Dalin E."/>
            <person name="Tice H."/>
            <person name="Pitluck S."/>
            <person name="Martinez M."/>
            <person name="Schmutz J."/>
            <person name="Larimer F."/>
            <person name="Land M."/>
            <person name="Hauser L."/>
            <person name="Kyrpides N."/>
            <person name="Kim E."/>
            <person name="Miller C.D."/>
            <person name="Hughes J.E."/>
            <person name="Anderson A.J."/>
            <person name="Sims R.C."/>
            <person name="Richardson P."/>
        </authorList>
    </citation>
    <scope>NUCLEOTIDE SEQUENCE [LARGE SCALE GENOMIC DNA]</scope>
    <source>
        <strain>MCS</strain>
    </source>
</reference>
<organism>
    <name type="scientific">Mycobacterium sp. (strain MCS)</name>
    <dbReference type="NCBI Taxonomy" id="164756"/>
    <lineage>
        <taxon>Bacteria</taxon>
        <taxon>Bacillati</taxon>
        <taxon>Actinomycetota</taxon>
        <taxon>Actinomycetes</taxon>
        <taxon>Mycobacteriales</taxon>
        <taxon>Mycobacteriaceae</taxon>
        <taxon>Mycobacterium</taxon>
    </lineage>
</organism>
<proteinExistence type="inferred from homology"/>
<name>FOLD_MYCSS</name>
<comment type="function">
    <text evidence="1">Catalyzes the oxidation of 5,10-methylenetetrahydrofolate to 5,10-methenyltetrahydrofolate and then the hydrolysis of 5,10-methenyltetrahydrofolate to 10-formyltetrahydrofolate.</text>
</comment>
<comment type="catalytic activity">
    <reaction evidence="1">
        <text>(6R)-5,10-methylene-5,6,7,8-tetrahydrofolate + NADP(+) = (6R)-5,10-methenyltetrahydrofolate + NADPH</text>
        <dbReference type="Rhea" id="RHEA:22812"/>
        <dbReference type="ChEBI" id="CHEBI:15636"/>
        <dbReference type="ChEBI" id="CHEBI:57455"/>
        <dbReference type="ChEBI" id="CHEBI:57783"/>
        <dbReference type="ChEBI" id="CHEBI:58349"/>
        <dbReference type="EC" id="1.5.1.5"/>
    </reaction>
</comment>
<comment type="catalytic activity">
    <reaction evidence="1">
        <text>(6R)-5,10-methenyltetrahydrofolate + H2O = (6R)-10-formyltetrahydrofolate + H(+)</text>
        <dbReference type="Rhea" id="RHEA:23700"/>
        <dbReference type="ChEBI" id="CHEBI:15377"/>
        <dbReference type="ChEBI" id="CHEBI:15378"/>
        <dbReference type="ChEBI" id="CHEBI:57455"/>
        <dbReference type="ChEBI" id="CHEBI:195366"/>
        <dbReference type="EC" id="3.5.4.9"/>
    </reaction>
</comment>
<comment type="pathway">
    <text evidence="1">One-carbon metabolism; tetrahydrofolate interconversion.</text>
</comment>
<comment type="subunit">
    <text evidence="1">Homodimer.</text>
</comment>
<comment type="similarity">
    <text evidence="1">Belongs to the tetrahydrofolate dehydrogenase/cyclohydrolase family.</text>
</comment>
<comment type="sequence caution" evidence="2">
    <conflict type="erroneous initiation">
        <sequence resource="EMBL-CDS" id="ABG07316"/>
    </conflict>
</comment>
<protein>
    <recommendedName>
        <fullName evidence="1">Bifunctional protein FolD</fullName>
    </recommendedName>
    <domain>
        <recommendedName>
            <fullName evidence="1">Methylenetetrahydrofolate dehydrogenase</fullName>
            <ecNumber evidence="1">1.5.1.5</ecNumber>
        </recommendedName>
    </domain>
    <domain>
        <recommendedName>
            <fullName evidence="1">Methenyltetrahydrofolate cyclohydrolase</fullName>
            <ecNumber evidence="1">3.5.4.9</ecNumber>
        </recommendedName>
    </domain>
</protein>
<evidence type="ECO:0000255" key="1">
    <source>
        <dbReference type="HAMAP-Rule" id="MF_01576"/>
    </source>
</evidence>
<evidence type="ECO:0000305" key="2"/>